<organism>
    <name type="scientific">Rattus norvegicus</name>
    <name type="common">Rat</name>
    <dbReference type="NCBI Taxonomy" id="10116"/>
    <lineage>
        <taxon>Eukaryota</taxon>
        <taxon>Metazoa</taxon>
        <taxon>Chordata</taxon>
        <taxon>Craniata</taxon>
        <taxon>Vertebrata</taxon>
        <taxon>Euteleostomi</taxon>
        <taxon>Mammalia</taxon>
        <taxon>Eutheria</taxon>
        <taxon>Euarchontoglires</taxon>
        <taxon>Glires</taxon>
        <taxon>Rodentia</taxon>
        <taxon>Myomorpha</taxon>
        <taxon>Muroidea</taxon>
        <taxon>Muridae</taxon>
        <taxon>Murinae</taxon>
        <taxon>Rattus</taxon>
    </lineage>
</organism>
<accession>P18420</accession>
<sequence length="263" mass="29518">MFRNQYDNDVTVWSPQGRIHQIEYAMEAVKQGSATVGLKSKTHAVLVALKRAQSELAAHQKKILHVDNHIGISIAGLTADARLLCNFMRQECLDSRFVFDRPLPVSRLVSLIGSKTQIPTQRYGRRPYGVGLLIAGYDDMGPHVFQTCPSANYFDCRAMSIGARSQSARTYLERHMSEFMQCNLDELVKHGLRALRETLPAEQDLTTKNVSIGIVGKDLEFTIYDDDDVSPFLDGLEERPQRKAQPSQAADEPAEKADEPMEH</sequence>
<dbReference type="EMBL" id="M29859">
    <property type="protein sequence ID" value="AAA41943.1"/>
    <property type="molecule type" value="mRNA"/>
</dbReference>
<dbReference type="EMBL" id="D90265">
    <property type="protein sequence ID" value="BAA14312.1"/>
    <property type="molecule type" value="mRNA"/>
</dbReference>
<dbReference type="EMBL" id="BC062233">
    <property type="protein sequence ID" value="AAH62233.1"/>
    <property type="molecule type" value="mRNA"/>
</dbReference>
<dbReference type="PIR" id="A32968">
    <property type="entry name" value="SNRTC2"/>
</dbReference>
<dbReference type="RefSeq" id="NP_058974.1">
    <property type="nucleotide sequence ID" value="NM_017278.1"/>
</dbReference>
<dbReference type="PDB" id="6EPC">
    <property type="method" value="EM"/>
    <property type="resolution" value="12.30 A"/>
    <property type="chains" value="F=1-263"/>
</dbReference>
<dbReference type="PDB" id="6EPD">
    <property type="method" value="EM"/>
    <property type="resolution" value="15.40 A"/>
    <property type="chains" value="F=1-263"/>
</dbReference>
<dbReference type="PDB" id="6EPE">
    <property type="method" value="EM"/>
    <property type="resolution" value="12.80 A"/>
    <property type="chains" value="F=1-263"/>
</dbReference>
<dbReference type="PDB" id="6EPF">
    <property type="method" value="EM"/>
    <property type="resolution" value="11.80 A"/>
    <property type="chains" value="F=1-263"/>
</dbReference>
<dbReference type="PDB" id="6TU3">
    <property type="method" value="EM"/>
    <property type="resolution" value="2.70 A"/>
    <property type="chains" value="F/T=1-263"/>
</dbReference>
<dbReference type="PDBsum" id="6EPC"/>
<dbReference type="PDBsum" id="6EPD"/>
<dbReference type="PDBsum" id="6EPE"/>
<dbReference type="PDBsum" id="6EPF"/>
<dbReference type="PDBsum" id="6TU3"/>
<dbReference type="EMDB" id="EMD-10586"/>
<dbReference type="EMDB" id="EMD-3913"/>
<dbReference type="EMDB" id="EMD-3914"/>
<dbReference type="EMDB" id="EMD-3915"/>
<dbReference type="EMDB" id="EMD-3916"/>
<dbReference type="SMR" id="P18420"/>
<dbReference type="BioGRID" id="248289">
    <property type="interactions" value="2"/>
</dbReference>
<dbReference type="ComplexPortal" id="CPX-8965">
    <property type="entry name" value="30S proteasome complex"/>
</dbReference>
<dbReference type="FunCoup" id="P18420">
    <property type="interactions" value="3131"/>
</dbReference>
<dbReference type="IntAct" id="P18420">
    <property type="interactions" value="1"/>
</dbReference>
<dbReference type="STRING" id="10116.ENSRNOP00000015946"/>
<dbReference type="GlyCosmos" id="P18420">
    <property type="glycosylation" value="1 site, No reported glycans"/>
</dbReference>
<dbReference type="GlyGen" id="P18420">
    <property type="glycosylation" value="1 site"/>
</dbReference>
<dbReference type="iPTMnet" id="P18420"/>
<dbReference type="PhosphoSitePlus" id="P18420"/>
<dbReference type="SwissPalm" id="P18420"/>
<dbReference type="jPOST" id="P18420"/>
<dbReference type="PaxDb" id="10116-ENSRNOP00000015946"/>
<dbReference type="Ensembl" id="ENSRNOT00000015946.5">
    <property type="protein sequence ID" value="ENSRNOP00000015946.4"/>
    <property type="gene ID" value="ENSRNOG00000011745.5"/>
</dbReference>
<dbReference type="GeneID" id="29668"/>
<dbReference type="KEGG" id="rno:29668"/>
<dbReference type="UCSC" id="RGD:61841">
    <property type="organism name" value="rat"/>
</dbReference>
<dbReference type="AGR" id="RGD:61841"/>
<dbReference type="CTD" id="5682"/>
<dbReference type="RGD" id="61841">
    <property type="gene designation" value="Psma1"/>
</dbReference>
<dbReference type="eggNOG" id="KOG0863">
    <property type="taxonomic scope" value="Eukaryota"/>
</dbReference>
<dbReference type="GeneTree" id="ENSGT00550000074855"/>
<dbReference type="HOGENOM" id="CLU_035750_8_0_1"/>
<dbReference type="InParanoid" id="P18420"/>
<dbReference type="OMA" id="NTQVYGK"/>
<dbReference type="OrthoDB" id="431557at2759"/>
<dbReference type="PhylomeDB" id="P18420"/>
<dbReference type="TreeFam" id="TF106206"/>
<dbReference type="Reactome" id="R-RNO-1169091">
    <property type="pathway name" value="Activation of NF-kappaB in B cells"/>
</dbReference>
<dbReference type="Reactome" id="R-RNO-1234176">
    <property type="pathway name" value="Oxygen-dependent proline hydroxylation of Hypoxia-inducible Factor Alpha"/>
</dbReference>
<dbReference type="Reactome" id="R-RNO-1236978">
    <property type="pathway name" value="Cross-presentation of soluble exogenous antigens (endosomes)"/>
</dbReference>
<dbReference type="Reactome" id="R-RNO-174084">
    <property type="pathway name" value="Autodegradation of Cdh1 by Cdh1:APC/C"/>
</dbReference>
<dbReference type="Reactome" id="R-RNO-174113">
    <property type="pathway name" value="SCF-beta-TrCP mediated degradation of Emi1"/>
</dbReference>
<dbReference type="Reactome" id="R-RNO-174154">
    <property type="pathway name" value="APC/C:Cdc20 mediated degradation of Securin"/>
</dbReference>
<dbReference type="Reactome" id="R-RNO-174178">
    <property type="pathway name" value="APC/C:Cdh1 mediated degradation of Cdc20 and other APC/C:Cdh1 targeted proteins in late mitosis/early G1"/>
</dbReference>
<dbReference type="Reactome" id="R-RNO-174184">
    <property type="pathway name" value="Cdc20:Phospho-APC/C mediated degradation of Cyclin A"/>
</dbReference>
<dbReference type="Reactome" id="R-RNO-187577">
    <property type="pathway name" value="SCF(Skp2)-mediated degradation of p27/p21"/>
</dbReference>
<dbReference type="Reactome" id="R-RNO-195253">
    <property type="pathway name" value="Degradation of beta-catenin by the destruction complex"/>
</dbReference>
<dbReference type="Reactome" id="R-RNO-2467813">
    <property type="pathway name" value="Separation of Sister Chromatids"/>
</dbReference>
<dbReference type="Reactome" id="R-RNO-349425">
    <property type="pathway name" value="Autodegradation of the E3 ubiquitin ligase COP1"/>
</dbReference>
<dbReference type="Reactome" id="R-RNO-350562">
    <property type="pathway name" value="Regulation of ornithine decarboxylase (ODC)"/>
</dbReference>
<dbReference type="Reactome" id="R-RNO-382556">
    <property type="pathway name" value="ABC-family proteins mediated transport"/>
</dbReference>
<dbReference type="Reactome" id="R-RNO-450408">
    <property type="pathway name" value="AUF1 (hnRNP D0) binds and destabilizes mRNA"/>
</dbReference>
<dbReference type="Reactome" id="R-RNO-4608870">
    <property type="pathway name" value="Asymmetric localization of PCP proteins"/>
</dbReference>
<dbReference type="Reactome" id="R-RNO-4641257">
    <property type="pathway name" value="Degradation of AXIN"/>
</dbReference>
<dbReference type="Reactome" id="R-RNO-4641258">
    <property type="pathway name" value="Degradation of DVL"/>
</dbReference>
<dbReference type="Reactome" id="R-RNO-5358346">
    <property type="pathway name" value="Hedgehog ligand biogenesis"/>
</dbReference>
<dbReference type="Reactome" id="R-RNO-5607761">
    <property type="pathway name" value="Dectin-1 mediated noncanonical NF-kB signaling"/>
</dbReference>
<dbReference type="Reactome" id="R-RNO-5610780">
    <property type="pathway name" value="Degradation of GLI1 by the proteasome"/>
</dbReference>
<dbReference type="Reactome" id="R-RNO-5610785">
    <property type="pathway name" value="GLI3 is processed to GLI3R by the proteasome"/>
</dbReference>
<dbReference type="Reactome" id="R-RNO-5632684">
    <property type="pathway name" value="Hedgehog 'on' state"/>
</dbReference>
<dbReference type="Reactome" id="R-RNO-5658442">
    <property type="pathway name" value="Regulation of RAS by GAPs"/>
</dbReference>
<dbReference type="Reactome" id="R-RNO-5668541">
    <property type="pathway name" value="TNFR2 non-canonical NF-kB pathway"/>
</dbReference>
<dbReference type="Reactome" id="R-RNO-5676590">
    <property type="pathway name" value="NIK--&gt;noncanonical NF-kB signaling"/>
</dbReference>
<dbReference type="Reactome" id="R-RNO-5687128">
    <property type="pathway name" value="MAPK6/MAPK4 signaling"/>
</dbReference>
<dbReference type="Reactome" id="R-RNO-5689603">
    <property type="pathway name" value="UCH proteinases"/>
</dbReference>
<dbReference type="Reactome" id="R-RNO-5689880">
    <property type="pathway name" value="Ub-specific processing proteases"/>
</dbReference>
<dbReference type="Reactome" id="R-RNO-68867">
    <property type="pathway name" value="Assembly of the pre-replicative complex"/>
</dbReference>
<dbReference type="Reactome" id="R-RNO-68949">
    <property type="pathway name" value="Orc1 removal from chromatin"/>
</dbReference>
<dbReference type="Reactome" id="R-RNO-69017">
    <property type="pathway name" value="CDK-mediated phosphorylation and removal of Cdc6"/>
</dbReference>
<dbReference type="Reactome" id="R-RNO-69481">
    <property type="pathway name" value="G2/M Checkpoints"/>
</dbReference>
<dbReference type="Reactome" id="R-RNO-69601">
    <property type="pathway name" value="Ubiquitin Mediated Degradation of Phosphorylated Cdc25A"/>
</dbReference>
<dbReference type="Reactome" id="R-RNO-75815">
    <property type="pathway name" value="Ubiquitin-dependent degradation of Cyclin D"/>
</dbReference>
<dbReference type="Reactome" id="R-RNO-8852276">
    <property type="pathway name" value="The role of GTSE1 in G2/M progression after G2 checkpoint"/>
</dbReference>
<dbReference type="Reactome" id="R-RNO-8854050">
    <property type="pathway name" value="FBXL7 down-regulates AURKA during mitotic entry and in early mitosis"/>
</dbReference>
<dbReference type="Reactome" id="R-RNO-8939236">
    <property type="pathway name" value="RUNX1 regulates transcription of genes involved in differentiation of HSCs"/>
</dbReference>
<dbReference type="Reactome" id="R-RNO-8941858">
    <property type="pathway name" value="Regulation of RUNX3 expression and activity"/>
</dbReference>
<dbReference type="Reactome" id="R-RNO-8948751">
    <property type="pathway name" value="Regulation of PTEN stability and activity"/>
</dbReference>
<dbReference type="Reactome" id="R-RNO-8951664">
    <property type="pathway name" value="Neddylation"/>
</dbReference>
<dbReference type="Reactome" id="R-RNO-9755511">
    <property type="pathway name" value="KEAP1-NFE2L2 pathway"/>
</dbReference>
<dbReference type="Reactome" id="R-RNO-9762114">
    <property type="pathway name" value="GSK3B and BTRC:CUL1-mediated-degradation of NFE2L2"/>
</dbReference>
<dbReference type="Reactome" id="R-RNO-983168">
    <property type="pathway name" value="Antigen processing: Ubiquitination &amp; Proteasome degradation"/>
</dbReference>
<dbReference type="Reactome" id="R-RNO-9907900">
    <property type="pathway name" value="Proteasome assembly"/>
</dbReference>
<dbReference type="PRO" id="PR:P18420"/>
<dbReference type="Proteomes" id="UP000002494">
    <property type="component" value="Chromosome 1"/>
</dbReference>
<dbReference type="Bgee" id="ENSRNOG00000011745">
    <property type="expression patterns" value="Expressed in ovary and 20 other cell types or tissues"/>
</dbReference>
<dbReference type="GO" id="GO:0005813">
    <property type="term" value="C:centrosome"/>
    <property type="evidence" value="ECO:0007669"/>
    <property type="project" value="Ensembl"/>
</dbReference>
<dbReference type="GO" id="GO:0005737">
    <property type="term" value="C:cytoplasm"/>
    <property type="evidence" value="ECO:0000266"/>
    <property type="project" value="RGD"/>
</dbReference>
<dbReference type="GO" id="GO:0005654">
    <property type="term" value="C:nucleoplasm"/>
    <property type="evidence" value="ECO:0007669"/>
    <property type="project" value="Ensembl"/>
</dbReference>
<dbReference type="GO" id="GO:0005634">
    <property type="term" value="C:nucleus"/>
    <property type="evidence" value="ECO:0000266"/>
    <property type="project" value="RGD"/>
</dbReference>
<dbReference type="GO" id="GO:0000502">
    <property type="term" value="C:proteasome complex"/>
    <property type="evidence" value="ECO:0000266"/>
    <property type="project" value="RGD"/>
</dbReference>
<dbReference type="GO" id="GO:0005839">
    <property type="term" value="C:proteasome core complex"/>
    <property type="evidence" value="ECO:0000250"/>
    <property type="project" value="UniProtKB"/>
</dbReference>
<dbReference type="GO" id="GO:0019773">
    <property type="term" value="C:proteasome core complex, alpha-subunit complex"/>
    <property type="evidence" value="ECO:0000250"/>
    <property type="project" value="UniProtKB"/>
</dbReference>
<dbReference type="GO" id="GO:0001530">
    <property type="term" value="F:lipopolysaccharide binding"/>
    <property type="evidence" value="ECO:0000266"/>
    <property type="project" value="RGD"/>
</dbReference>
<dbReference type="GO" id="GO:0002376">
    <property type="term" value="P:immune system process"/>
    <property type="evidence" value="ECO:0007669"/>
    <property type="project" value="UniProtKB-KW"/>
</dbReference>
<dbReference type="GO" id="GO:0002862">
    <property type="term" value="P:negative regulation of inflammatory response to antigenic stimulus"/>
    <property type="evidence" value="ECO:0000266"/>
    <property type="project" value="RGD"/>
</dbReference>
<dbReference type="GO" id="GO:0043161">
    <property type="term" value="P:proteasome-mediated ubiquitin-dependent protein catabolic process"/>
    <property type="evidence" value="ECO:0000318"/>
    <property type="project" value="GO_Central"/>
</dbReference>
<dbReference type="CDD" id="cd03749">
    <property type="entry name" value="proteasome_alpha_type_1"/>
    <property type="match status" value="1"/>
</dbReference>
<dbReference type="FunFam" id="3.60.20.10:FF:000025">
    <property type="entry name" value="Proteasome subunit alpha type"/>
    <property type="match status" value="1"/>
</dbReference>
<dbReference type="Gene3D" id="3.60.20.10">
    <property type="entry name" value="Glutamine Phosphoribosylpyrophosphate, subunit 1, domain 1"/>
    <property type="match status" value="1"/>
</dbReference>
<dbReference type="InterPro" id="IPR029055">
    <property type="entry name" value="Ntn_hydrolases_N"/>
</dbReference>
<dbReference type="InterPro" id="IPR050115">
    <property type="entry name" value="Proteasome_alpha"/>
</dbReference>
<dbReference type="InterPro" id="IPR023332">
    <property type="entry name" value="Proteasome_alpha-type"/>
</dbReference>
<dbReference type="InterPro" id="IPR035144">
    <property type="entry name" value="Proteasome_alpha1"/>
</dbReference>
<dbReference type="InterPro" id="IPR000426">
    <property type="entry name" value="Proteasome_asu_N"/>
</dbReference>
<dbReference type="InterPro" id="IPR001353">
    <property type="entry name" value="Proteasome_sua/b"/>
</dbReference>
<dbReference type="PANTHER" id="PTHR11599">
    <property type="entry name" value="PROTEASOME SUBUNIT ALPHA/BETA"/>
    <property type="match status" value="1"/>
</dbReference>
<dbReference type="Pfam" id="PF00227">
    <property type="entry name" value="Proteasome"/>
    <property type="match status" value="1"/>
</dbReference>
<dbReference type="Pfam" id="PF10584">
    <property type="entry name" value="Proteasome_A_N"/>
    <property type="match status" value="1"/>
</dbReference>
<dbReference type="SMART" id="SM00948">
    <property type="entry name" value="Proteasome_A_N"/>
    <property type="match status" value="1"/>
</dbReference>
<dbReference type="SUPFAM" id="SSF56235">
    <property type="entry name" value="N-terminal nucleophile aminohydrolases (Ntn hydrolases)"/>
    <property type="match status" value="1"/>
</dbReference>
<dbReference type="PROSITE" id="PS00388">
    <property type="entry name" value="PROTEASOME_ALPHA_1"/>
    <property type="match status" value="1"/>
</dbReference>
<dbReference type="PROSITE" id="PS51475">
    <property type="entry name" value="PROTEASOME_ALPHA_2"/>
    <property type="match status" value="1"/>
</dbReference>
<protein>
    <recommendedName>
        <fullName>Proteasome subunit alpha type-1</fullName>
    </recommendedName>
    <alternativeName>
        <fullName>Macropain subunit C2</fullName>
    </alternativeName>
    <alternativeName>
        <fullName>Multicatalytic endopeptidase complex subunit C2</fullName>
    </alternativeName>
    <alternativeName>
        <fullName>Proteasome component C2</fullName>
    </alternativeName>
    <alternativeName>
        <fullName>Proteasome nu chain</fullName>
    </alternativeName>
</protein>
<evidence type="ECO:0000250" key="1"/>
<evidence type="ECO:0000250" key="2">
    <source>
        <dbReference type="UniProtKB" id="P25786"/>
    </source>
</evidence>
<evidence type="ECO:0000255" key="3">
    <source>
        <dbReference type="PROSITE-ProRule" id="PRU00808"/>
    </source>
</evidence>
<evidence type="ECO:0000256" key="4">
    <source>
        <dbReference type="SAM" id="MobiDB-lite"/>
    </source>
</evidence>
<evidence type="ECO:0000269" key="5">
    <source>
    </source>
</evidence>
<evidence type="ECO:0007829" key="6">
    <source>
        <dbReference type="PDB" id="6TU3"/>
    </source>
</evidence>
<name>PSA1_RAT</name>
<feature type="chain" id="PRO_0000124064" description="Proteasome subunit alpha type-1">
    <location>
        <begin position="1"/>
        <end position="263"/>
    </location>
</feature>
<feature type="region of interest" description="Disordered" evidence="4">
    <location>
        <begin position="232"/>
        <end position="263"/>
    </location>
</feature>
<feature type="compositionally biased region" description="Basic and acidic residues" evidence="4">
    <location>
        <begin position="253"/>
        <end position="263"/>
    </location>
</feature>
<feature type="modified residue" description="N-acetylmethionine" evidence="5">
    <location>
        <position position="1"/>
    </location>
</feature>
<feature type="modified residue" description="Phosphoserine; alternate" evidence="2">
    <location>
        <position position="110"/>
    </location>
</feature>
<feature type="modified residue" description="Phosphoserine" evidence="2">
    <location>
        <position position="177"/>
    </location>
</feature>
<feature type="glycosylation site" description="O-linked (GlcNAc) serine; alternate" evidence="1">
    <location>
        <position position="110"/>
    </location>
</feature>
<feature type="cross-link" description="Glycyl lysine isopeptide (Lys-Gly) (interchain with G-Cter in ubiquitin)" evidence="2">
    <location>
        <position position="115"/>
    </location>
</feature>
<feature type="cross-link" description="Glycyl lysine isopeptide (Lys-Gly) (interchain with G-Cter in ubiquitin)" evidence="2">
    <location>
        <position position="208"/>
    </location>
</feature>
<feature type="strand" evidence="6">
    <location>
        <begin position="6"/>
        <end position="8"/>
    </location>
</feature>
<feature type="helix" evidence="6">
    <location>
        <begin position="20"/>
        <end position="29"/>
    </location>
</feature>
<feature type="strand" evidence="6">
    <location>
        <begin position="35"/>
        <end position="39"/>
    </location>
</feature>
<feature type="strand" evidence="6">
    <location>
        <begin position="41"/>
        <end position="49"/>
    </location>
</feature>
<feature type="strand" evidence="6">
    <location>
        <begin position="55"/>
        <end position="58"/>
    </location>
</feature>
<feature type="strand" evidence="6">
    <location>
        <begin position="63"/>
        <end position="65"/>
    </location>
</feature>
<feature type="strand" evidence="6">
    <location>
        <begin position="67"/>
        <end position="73"/>
    </location>
</feature>
<feature type="helix" evidence="6">
    <location>
        <begin position="78"/>
        <end position="99"/>
    </location>
</feature>
<feature type="helix" evidence="6">
    <location>
        <begin position="105"/>
        <end position="117"/>
    </location>
</feature>
<feature type="helix" evidence="6">
    <location>
        <begin position="118"/>
        <end position="121"/>
    </location>
</feature>
<feature type="strand" evidence="6">
    <location>
        <begin position="130"/>
        <end position="136"/>
    </location>
</feature>
<feature type="strand" evidence="6">
    <location>
        <begin position="149"/>
        <end position="151"/>
    </location>
</feature>
<feature type="strand" evidence="6">
    <location>
        <begin position="156"/>
        <end position="159"/>
    </location>
</feature>
<feature type="turn" evidence="6">
    <location>
        <begin position="163"/>
        <end position="165"/>
    </location>
</feature>
<feature type="helix" evidence="6">
    <location>
        <begin position="166"/>
        <end position="175"/>
    </location>
</feature>
<feature type="helix" evidence="6">
    <location>
        <begin position="176"/>
        <end position="178"/>
    </location>
</feature>
<feature type="turn" evidence="6">
    <location>
        <begin position="179"/>
        <end position="181"/>
    </location>
</feature>
<feature type="helix" evidence="6">
    <location>
        <begin position="184"/>
        <end position="197"/>
    </location>
</feature>
<feature type="strand" evidence="6">
    <location>
        <begin position="207"/>
        <end position="216"/>
    </location>
</feature>
<feature type="strand" evidence="6">
    <location>
        <begin position="219"/>
        <end position="224"/>
    </location>
</feature>
<feature type="turn" evidence="6">
    <location>
        <begin position="226"/>
        <end position="228"/>
    </location>
</feature>
<feature type="helix" evidence="6">
    <location>
        <begin position="230"/>
        <end position="232"/>
    </location>
</feature>
<feature type="strand" evidence="6">
    <location>
        <begin position="233"/>
        <end position="235"/>
    </location>
</feature>
<comment type="function">
    <text evidence="2">Component of the 20S core proteasome complex involved in the proteolytic degradation of most intracellular proteins. This complex plays numerous essential roles within the cell by associating with different regulatory particles. Associated with two 19S regulatory particles, forms the 26S proteasome and thus participates in the ATP-dependent degradation of ubiquitinated proteins. The 26S proteasome plays a key role in the maintenance of protein homeostasis by removing misfolded or damaged proteins that could impair cellular functions, and by removing proteins whose functions are no longer required. Associated with the PA200 or PA28, the 20S proteasome mediates ubiquitin-independent protein degradation. This type of proteolysis is required in several pathways including spermatogenesis (20S-PA200 complex) or generation of a subset of MHC class I-presented antigenic peptides (20S-PA28 complex).</text>
</comment>
<comment type="subunit">
    <text evidence="2">The 26S proteasome consists of a 20S proteasome core and two 19S regulatory subunits. The 20S proteasome core is a barrel-shaped complex made of 28 subunits that are arranged in four stacked rings. The two outer rings are each formed by seven alpha subunits, and the two inner rings are formed by seven beta subunits. The proteolytic activity is exerted by three beta-subunits PSMB5, PSMB6 and PSMB7. Interacts with NOTCH3. Interacts with ZFAND1 (By similarity).</text>
</comment>
<comment type="subcellular location">
    <subcellularLocation>
        <location evidence="2">Cytoplasm</location>
    </subcellularLocation>
    <subcellularLocation>
        <location evidence="2">Nucleus</location>
    </subcellularLocation>
    <text evidence="2">Translocated from the cytoplasm into the nucleus following interaction with AKIRIN2, which bridges the proteasome with the nuclear import receptor IPO9.</text>
</comment>
<comment type="tissue specificity">
    <text>Ubiquitous.</text>
</comment>
<comment type="PTM">
    <text>Proteolytically cleaved from a C-terminal extension in the course of the conversion of the proteasome from its latent form into its active form.</text>
</comment>
<comment type="similarity">
    <text evidence="3">Belongs to the peptidase T1A family.</text>
</comment>
<reference key="1">
    <citation type="journal article" date="1989" name="Biochemistry">
        <title>Molecular cloning of cDNA for proteasomes (multicatalytic proteinase complexes) from rat liver: primary structure of the largest component (C2).</title>
        <authorList>
            <person name="Fujiwara T."/>
            <person name="Tanaka K."/>
            <person name="Kumatori A."/>
            <person name="Shin S."/>
            <person name="Yoshimura T."/>
            <person name="Ichihara A."/>
            <person name="Tokunaga F."/>
            <person name="Aruga R."/>
            <person name="Iwanaga S."/>
            <person name="Kakizuka A."/>
            <person name="Nakanishi S."/>
        </authorList>
    </citation>
    <scope>NUCLEOTIDE SEQUENCE [MRNA]</scope>
    <scope>PARTIAL PROTEIN SEQUENCE</scope>
    <source>
        <tissue>Liver</tissue>
    </source>
</reference>
<reference key="2">
    <citation type="journal article" date="2004" name="Genome Res.">
        <title>The status, quality, and expansion of the NIH full-length cDNA project: the Mammalian Gene Collection (MGC).</title>
        <authorList>
            <consortium name="The MGC Project Team"/>
        </authorList>
    </citation>
    <scope>NUCLEOTIDE SEQUENCE [LARGE SCALE MRNA]</scope>
    <source>
        <tissue>Pituitary</tissue>
    </source>
</reference>
<reference key="3">
    <citation type="journal article" date="1990" name="FEBS Lett.">
        <title>The NH2-terminal residues of rat liver proteasome (multicatalytic proteinase complex) subunits, C2, C3 and C8, are N alpha-acetylated.</title>
        <authorList>
            <person name="Tokunaga F."/>
            <person name="Aruga R."/>
            <person name="Iwanaga S."/>
            <person name="Tanaka K."/>
            <person name="Ichihara A."/>
            <person name="Takao T."/>
            <person name="Shimonishi Y."/>
        </authorList>
    </citation>
    <scope>PROTEIN SEQUENCE OF 1-30</scope>
    <scope>ACETYLATION AT MET-1</scope>
    <source>
        <tissue>Liver</tissue>
    </source>
</reference>
<reference key="4">
    <citation type="submission" date="2007-04" db="UniProtKB">
        <authorList>
            <person name="Lubec G."/>
            <person name="Chen W.-Q."/>
        </authorList>
    </citation>
    <scope>PROTEIN SEQUENCE OF 63-82 AND 97-107</scope>
    <scope>IDENTIFICATION BY MASS SPECTROMETRY</scope>
    <source>
        <strain>Sprague-Dawley</strain>
        <tissue>Hippocampus</tissue>
    </source>
</reference>
<keyword id="KW-0002">3D-structure</keyword>
<keyword id="KW-0007">Acetylation</keyword>
<keyword id="KW-0963">Cytoplasm</keyword>
<keyword id="KW-0903">Direct protein sequencing</keyword>
<keyword id="KW-0325">Glycoprotein</keyword>
<keyword id="KW-0391">Immunity</keyword>
<keyword id="KW-1017">Isopeptide bond</keyword>
<keyword id="KW-0539">Nucleus</keyword>
<keyword id="KW-0597">Phosphoprotein</keyword>
<keyword id="KW-0647">Proteasome</keyword>
<keyword id="KW-1185">Reference proteome</keyword>
<keyword id="KW-0832">Ubl conjugation</keyword>
<proteinExistence type="evidence at protein level"/>
<gene>
    <name type="primary">Psma1</name>
</gene>